<feature type="chain" id="PRO_0000192945" description="COX assembly mitochondrial protein 2 homolog">
    <location>
        <begin position="1"/>
        <end position="102"/>
    </location>
</feature>
<feature type="domain" description="CHCH" evidence="2">
    <location>
        <begin position="11"/>
        <end position="55"/>
    </location>
</feature>
<feature type="short sequence motif" description="Cx9C motif 1" evidence="2">
    <location>
        <begin position="14"/>
        <end position="24"/>
    </location>
</feature>
<feature type="short sequence motif" description="Cx9C motif 2" evidence="2">
    <location>
        <begin position="37"/>
        <end position="47"/>
    </location>
</feature>
<feature type="disulfide bond" evidence="2">
    <location>
        <begin position="14"/>
        <end position="47"/>
    </location>
</feature>
<feature type="disulfide bond" evidence="2">
    <location>
        <begin position="24"/>
        <end position="37"/>
    </location>
</feature>
<organism>
    <name type="scientific">Caenorhabditis elegans</name>
    <dbReference type="NCBI Taxonomy" id="6239"/>
    <lineage>
        <taxon>Eukaryota</taxon>
        <taxon>Metazoa</taxon>
        <taxon>Ecdysozoa</taxon>
        <taxon>Nematoda</taxon>
        <taxon>Chromadorea</taxon>
        <taxon>Rhabditida</taxon>
        <taxon>Rhabditina</taxon>
        <taxon>Rhabditomorpha</taxon>
        <taxon>Rhabditoidea</taxon>
        <taxon>Rhabditidae</taxon>
        <taxon>Peloderinae</taxon>
        <taxon>Caenorhabditis</taxon>
    </lineage>
</organism>
<dbReference type="EMBL" id="FO080789">
    <property type="protein sequence ID" value="CCD66790.1"/>
    <property type="molecule type" value="Genomic_DNA"/>
</dbReference>
<dbReference type="RefSeq" id="NP_001379778.1">
    <property type="nucleotide sequence ID" value="NM_001393330.1"/>
</dbReference>
<dbReference type="RefSeq" id="NP_741118.1">
    <property type="nucleotide sequence ID" value="NM_171105.4"/>
</dbReference>
<dbReference type="BioGRID" id="56680">
    <property type="interactions" value="1"/>
</dbReference>
<dbReference type="FunCoup" id="Q8MNU7">
    <property type="interactions" value="516"/>
</dbReference>
<dbReference type="STRING" id="6239.C35D10.17.1"/>
<dbReference type="PaxDb" id="6239-C35D10.17"/>
<dbReference type="PeptideAtlas" id="Q8MNU7"/>
<dbReference type="EnsemblMetazoa" id="C35D10.17.1">
    <property type="protein sequence ID" value="C35D10.17.1"/>
    <property type="gene ID" value="WBGene00016452"/>
</dbReference>
<dbReference type="EnsemblMetazoa" id="C35D10.17.2">
    <property type="protein sequence ID" value="C35D10.17.2"/>
    <property type="gene ID" value="WBGene00016452"/>
</dbReference>
<dbReference type="GeneID" id="259504"/>
<dbReference type="UCSC" id="C35D10.17">
    <property type="organism name" value="c. elegans"/>
</dbReference>
<dbReference type="AGR" id="WB:WBGene00016452"/>
<dbReference type="WormBase" id="C35D10.17">
    <property type="protein sequence ID" value="CE30625"/>
    <property type="gene ID" value="WBGene00016452"/>
</dbReference>
<dbReference type="eggNOG" id="KOG4148">
    <property type="taxonomic scope" value="Eukaryota"/>
</dbReference>
<dbReference type="GeneTree" id="ENSGT00390000016908"/>
<dbReference type="HOGENOM" id="CLU_179519_0_0_1"/>
<dbReference type="InParanoid" id="Q8MNU7"/>
<dbReference type="OMA" id="HSEKPIG"/>
<dbReference type="OrthoDB" id="532630at2759"/>
<dbReference type="PhylomeDB" id="Q8MNU7"/>
<dbReference type="PRO" id="PR:Q8MNU7"/>
<dbReference type="Proteomes" id="UP000001940">
    <property type="component" value="Chromosome III"/>
</dbReference>
<dbReference type="Bgee" id="WBGene00016452">
    <property type="expression patterns" value="Expressed in larva and 3 other cell types or tissues"/>
</dbReference>
<dbReference type="GO" id="GO:0005739">
    <property type="term" value="C:mitochondrion"/>
    <property type="evidence" value="ECO:0000318"/>
    <property type="project" value="GO_Central"/>
</dbReference>
<dbReference type="InterPro" id="IPR013892">
    <property type="entry name" value="Cyt_c_biogenesis_Cmc1-like"/>
</dbReference>
<dbReference type="PANTHER" id="PTHR22977">
    <property type="entry name" value="COX ASSEMBLY MITOCHONDRIAL PROTEIN"/>
    <property type="match status" value="1"/>
</dbReference>
<dbReference type="PANTHER" id="PTHR22977:SF1">
    <property type="entry name" value="COX ASSEMBLY MITOCHONDRIAL PROTEIN 2 HOMOLOG"/>
    <property type="match status" value="1"/>
</dbReference>
<dbReference type="Pfam" id="PF08583">
    <property type="entry name" value="Cmc1"/>
    <property type="match status" value="1"/>
</dbReference>
<dbReference type="PROSITE" id="PS51808">
    <property type="entry name" value="CHCH"/>
    <property type="match status" value="1"/>
</dbReference>
<gene>
    <name type="ORF">C35D10.17</name>
</gene>
<evidence type="ECO:0000250" key="1"/>
<evidence type="ECO:0000255" key="2">
    <source>
        <dbReference type="PROSITE-ProRule" id="PRU01150"/>
    </source>
</evidence>
<evidence type="ECO:0000269" key="3">
    <source>
    </source>
</evidence>
<evidence type="ECO:0000305" key="4"/>
<reference key="1">
    <citation type="journal article" date="1998" name="Science">
        <title>Genome sequence of the nematode C. elegans: a platform for investigating biology.</title>
        <authorList>
            <consortium name="The C. elegans sequencing consortium"/>
        </authorList>
    </citation>
    <scope>NUCLEOTIDE SEQUENCE [LARGE SCALE GENOMIC DNA]</scope>
    <source>
        <strain>Bristol N2</strain>
    </source>
</reference>
<reference key="2">
    <citation type="journal article" date="2010" name="J. Biol. Chem.">
        <title>The conserved mitochondrial twin Cx9C protein Cmc2 Is a Cmc1 homologue essential for cytochrome c oxidase biogenesis.</title>
        <authorList>
            <person name="Horn D."/>
            <person name="Zhou W."/>
            <person name="Trevisson E."/>
            <person name="Al-Ali H."/>
            <person name="Harris T.K."/>
            <person name="Salviati L."/>
            <person name="Barrientos A."/>
        </authorList>
    </citation>
    <scope>FUNCTION</scope>
</reference>
<accession>Q8MNU7</accession>
<keyword id="KW-1015">Disulfide bond</keyword>
<keyword id="KW-0496">Mitochondrion</keyword>
<keyword id="KW-1185">Reference proteome</keyword>
<sequence length="102" mass="11993">MLPDLSPHLHTKECNMLIEFLQRCHSEKPIGKMIGKCSYWDEAVWQCTKKERIWRRDNNPAYKRRIVELRSLPEKYWTPALHKLKEDGVLIGGADQSQGCKI</sequence>
<protein>
    <recommendedName>
        <fullName>COX assembly mitochondrial protein 2 homolog</fullName>
    </recommendedName>
</protein>
<proteinExistence type="inferred from homology"/>
<comment type="function">
    <text evidence="3">May be involved in cytochrome c oxidase biogenesis.</text>
</comment>
<comment type="subcellular location">
    <subcellularLocation>
        <location evidence="1">Mitochondrion</location>
    </subcellularLocation>
</comment>
<comment type="similarity">
    <text evidence="4">Belongs to the CMC family.</text>
</comment>
<name>COXM2_CAEEL</name>